<organism>
    <name type="scientific">Escherichia coli O139:H28 (strain E24377A / ETEC)</name>
    <dbReference type="NCBI Taxonomy" id="331111"/>
    <lineage>
        <taxon>Bacteria</taxon>
        <taxon>Pseudomonadati</taxon>
        <taxon>Pseudomonadota</taxon>
        <taxon>Gammaproteobacteria</taxon>
        <taxon>Enterobacterales</taxon>
        <taxon>Enterobacteriaceae</taxon>
        <taxon>Escherichia</taxon>
    </lineage>
</organism>
<name>PUR9_ECO24</name>
<dbReference type="EC" id="2.1.2.3" evidence="1"/>
<dbReference type="EC" id="3.5.4.10" evidence="1"/>
<dbReference type="EMBL" id="CP000800">
    <property type="protein sequence ID" value="ABV18418.1"/>
    <property type="molecule type" value="Genomic_DNA"/>
</dbReference>
<dbReference type="RefSeq" id="WP_001187485.1">
    <property type="nucleotide sequence ID" value="NC_009801.1"/>
</dbReference>
<dbReference type="SMR" id="A7ZUM3"/>
<dbReference type="KEGG" id="ecw:EcE24377A_4550"/>
<dbReference type="HOGENOM" id="CLU_016316_5_2_6"/>
<dbReference type="UniPathway" id="UPA00074">
    <property type="reaction ID" value="UER00133"/>
</dbReference>
<dbReference type="UniPathway" id="UPA00074">
    <property type="reaction ID" value="UER00135"/>
</dbReference>
<dbReference type="Proteomes" id="UP000001122">
    <property type="component" value="Chromosome"/>
</dbReference>
<dbReference type="GO" id="GO:0005829">
    <property type="term" value="C:cytosol"/>
    <property type="evidence" value="ECO:0007669"/>
    <property type="project" value="TreeGrafter"/>
</dbReference>
<dbReference type="GO" id="GO:0003937">
    <property type="term" value="F:IMP cyclohydrolase activity"/>
    <property type="evidence" value="ECO:0007669"/>
    <property type="project" value="UniProtKB-UniRule"/>
</dbReference>
<dbReference type="GO" id="GO:0004643">
    <property type="term" value="F:phosphoribosylaminoimidazolecarboxamide formyltransferase activity"/>
    <property type="evidence" value="ECO:0007669"/>
    <property type="project" value="UniProtKB-UniRule"/>
</dbReference>
<dbReference type="GO" id="GO:0006189">
    <property type="term" value="P:'de novo' IMP biosynthetic process"/>
    <property type="evidence" value="ECO:0007669"/>
    <property type="project" value="UniProtKB-UniRule"/>
</dbReference>
<dbReference type="CDD" id="cd01421">
    <property type="entry name" value="IMPCH"/>
    <property type="match status" value="1"/>
</dbReference>
<dbReference type="FunFam" id="3.40.140.20:FF:000001">
    <property type="entry name" value="Bifunctional purine biosynthesis protein PurH"/>
    <property type="match status" value="1"/>
</dbReference>
<dbReference type="FunFam" id="3.40.140.20:FF:000002">
    <property type="entry name" value="Bifunctional purine biosynthesis protein PurH"/>
    <property type="match status" value="1"/>
</dbReference>
<dbReference type="FunFam" id="3.40.50.1380:FF:000001">
    <property type="entry name" value="Bifunctional purine biosynthesis protein PurH"/>
    <property type="match status" value="1"/>
</dbReference>
<dbReference type="Gene3D" id="3.40.140.20">
    <property type="match status" value="2"/>
</dbReference>
<dbReference type="Gene3D" id="3.40.50.1380">
    <property type="entry name" value="Methylglyoxal synthase-like domain"/>
    <property type="match status" value="1"/>
</dbReference>
<dbReference type="HAMAP" id="MF_00139">
    <property type="entry name" value="PurH"/>
    <property type="match status" value="1"/>
</dbReference>
<dbReference type="InterPro" id="IPR024051">
    <property type="entry name" value="AICAR_Tfase_dup_dom_sf"/>
</dbReference>
<dbReference type="InterPro" id="IPR016193">
    <property type="entry name" value="Cytidine_deaminase-like"/>
</dbReference>
<dbReference type="InterPro" id="IPR011607">
    <property type="entry name" value="MGS-like_dom"/>
</dbReference>
<dbReference type="InterPro" id="IPR036914">
    <property type="entry name" value="MGS-like_dom_sf"/>
</dbReference>
<dbReference type="InterPro" id="IPR002695">
    <property type="entry name" value="PurH-like"/>
</dbReference>
<dbReference type="NCBIfam" id="NF002049">
    <property type="entry name" value="PRK00881.1"/>
    <property type="match status" value="1"/>
</dbReference>
<dbReference type="NCBIfam" id="TIGR00355">
    <property type="entry name" value="purH"/>
    <property type="match status" value="1"/>
</dbReference>
<dbReference type="PANTHER" id="PTHR11692:SF0">
    <property type="entry name" value="BIFUNCTIONAL PURINE BIOSYNTHESIS PROTEIN ATIC"/>
    <property type="match status" value="1"/>
</dbReference>
<dbReference type="PANTHER" id="PTHR11692">
    <property type="entry name" value="BIFUNCTIONAL PURINE BIOSYNTHESIS PROTEIN PURH"/>
    <property type="match status" value="1"/>
</dbReference>
<dbReference type="Pfam" id="PF01808">
    <property type="entry name" value="AICARFT_IMPCHas"/>
    <property type="match status" value="1"/>
</dbReference>
<dbReference type="Pfam" id="PF02142">
    <property type="entry name" value="MGS"/>
    <property type="match status" value="1"/>
</dbReference>
<dbReference type="PIRSF" id="PIRSF000414">
    <property type="entry name" value="AICARFT_IMPCHas"/>
    <property type="match status" value="1"/>
</dbReference>
<dbReference type="SMART" id="SM00798">
    <property type="entry name" value="AICARFT_IMPCHas"/>
    <property type="match status" value="1"/>
</dbReference>
<dbReference type="SMART" id="SM00851">
    <property type="entry name" value="MGS"/>
    <property type="match status" value="1"/>
</dbReference>
<dbReference type="SUPFAM" id="SSF53927">
    <property type="entry name" value="Cytidine deaminase-like"/>
    <property type="match status" value="1"/>
</dbReference>
<dbReference type="SUPFAM" id="SSF52335">
    <property type="entry name" value="Methylglyoxal synthase-like"/>
    <property type="match status" value="1"/>
</dbReference>
<dbReference type="PROSITE" id="PS51855">
    <property type="entry name" value="MGS"/>
    <property type="match status" value="1"/>
</dbReference>
<comment type="catalytic activity">
    <reaction evidence="1">
        <text>(6R)-10-formyltetrahydrofolate + 5-amino-1-(5-phospho-beta-D-ribosyl)imidazole-4-carboxamide = 5-formamido-1-(5-phospho-D-ribosyl)imidazole-4-carboxamide + (6S)-5,6,7,8-tetrahydrofolate</text>
        <dbReference type="Rhea" id="RHEA:22192"/>
        <dbReference type="ChEBI" id="CHEBI:57453"/>
        <dbReference type="ChEBI" id="CHEBI:58467"/>
        <dbReference type="ChEBI" id="CHEBI:58475"/>
        <dbReference type="ChEBI" id="CHEBI:195366"/>
        <dbReference type="EC" id="2.1.2.3"/>
    </reaction>
</comment>
<comment type="catalytic activity">
    <reaction evidence="1">
        <text>IMP + H2O = 5-formamido-1-(5-phospho-D-ribosyl)imidazole-4-carboxamide</text>
        <dbReference type="Rhea" id="RHEA:18445"/>
        <dbReference type="ChEBI" id="CHEBI:15377"/>
        <dbReference type="ChEBI" id="CHEBI:58053"/>
        <dbReference type="ChEBI" id="CHEBI:58467"/>
        <dbReference type="EC" id="3.5.4.10"/>
    </reaction>
</comment>
<comment type="pathway">
    <text evidence="1">Purine metabolism; IMP biosynthesis via de novo pathway; 5-formamido-1-(5-phospho-D-ribosyl)imidazole-4-carboxamide from 5-amino-1-(5-phospho-D-ribosyl)imidazole-4-carboxamide (10-formyl THF route): step 1/1.</text>
</comment>
<comment type="pathway">
    <text evidence="1">Purine metabolism; IMP biosynthesis via de novo pathway; IMP from 5-formamido-1-(5-phospho-D-ribosyl)imidazole-4-carboxamide: step 1/1.</text>
</comment>
<comment type="domain">
    <text evidence="1">The IMP cyclohydrolase activity resides in the N-terminal region.</text>
</comment>
<comment type="similarity">
    <text evidence="1">Belongs to the PurH family.</text>
</comment>
<reference key="1">
    <citation type="journal article" date="2008" name="J. Bacteriol.">
        <title>The pangenome structure of Escherichia coli: comparative genomic analysis of E. coli commensal and pathogenic isolates.</title>
        <authorList>
            <person name="Rasko D.A."/>
            <person name="Rosovitz M.J."/>
            <person name="Myers G.S.A."/>
            <person name="Mongodin E.F."/>
            <person name="Fricke W.F."/>
            <person name="Gajer P."/>
            <person name="Crabtree J."/>
            <person name="Sebaihia M."/>
            <person name="Thomson N.R."/>
            <person name="Chaudhuri R."/>
            <person name="Henderson I.R."/>
            <person name="Sperandio V."/>
            <person name="Ravel J."/>
        </authorList>
    </citation>
    <scope>NUCLEOTIDE SEQUENCE [LARGE SCALE GENOMIC DNA]</scope>
    <source>
        <strain>E24377A / ETEC</strain>
    </source>
</reference>
<feature type="chain" id="PRO_1000057894" description="Bifunctional purine biosynthesis protein PurH">
    <location>
        <begin position="1"/>
        <end position="529"/>
    </location>
</feature>
<feature type="domain" description="MGS-like" evidence="2">
    <location>
        <begin position="1"/>
        <end position="148"/>
    </location>
</feature>
<feature type="modified residue" description="N6-acetyllysine" evidence="1">
    <location>
        <position position="287"/>
    </location>
</feature>
<keyword id="KW-0007">Acetylation</keyword>
<keyword id="KW-0378">Hydrolase</keyword>
<keyword id="KW-0511">Multifunctional enzyme</keyword>
<keyword id="KW-0658">Purine biosynthesis</keyword>
<keyword id="KW-1185">Reference proteome</keyword>
<keyword id="KW-0808">Transferase</keyword>
<gene>
    <name evidence="1" type="primary">purH</name>
    <name type="ordered locus">EcE24377A_4550</name>
</gene>
<proteinExistence type="inferred from homology"/>
<protein>
    <recommendedName>
        <fullName evidence="1">Bifunctional purine biosynthesis protein PurH</fullName>
    </recommendedName>
    <domain>
        <recommendedName>
            <fullName evidence="1">Phosphoribosylaminoimidazolecarboxamide formyltransferase</fullName>
            <ecNumber evidence="1">2.1.2.3</ecNumber>
        </recommendedName>
        <alternativeName>
            <fullName evidence="1">AICAR transformylase</fullName>
        </alternativeName>
    </domain>
    <domain>
        <recommendedName>
            <fullName evidence="1">IMP cyclohydrolase</fullName>
            <ecNumber evidence="1">3.5.4.10</ecNumber>
        </recommendedName>
        <alternativeName>
            <fullName evidence="1">ATIC</fullName>
        </alternativeName>
        <alternativeName>
            <fullName evidence="1">IMP synthase</fullName>
        </alternativeName>
        <alternativeName>
            <fullName evidence="1">Inosinicase</fullName>
        </alternativeName>
    </domain>
</protein>
<sequence length="529" mass="57402">MQQRRPIRRALLSVSDKAGIVEFAQALSARGVELLSTGGTARLLAEKGLPVTEVSDYTGFPEMMDGRVKTLHPKVHGGILGRRGQDDAIMEEHQIQPIDMVVVNLYPFAKTVAREGCSLEDAVENIDIGGPTMVRSAAKNHKDVAIVVKSSDYDAIIKEMDDNEGSLTLATRFDLAIKAFEHTAAYDSMIANYFGSMVPAYHGESKEAAGRFPRTLNLNFIKKQDMRYGENSHQQAAFYIEENVKEASVATATQVQGKALSYNNIADTDAALECVKEFAEPACVIVKHANPCGVAISNSILDAYDRAYKTDPTSAFGGIIAFNRELDAETAQAIISRQFVEVIIAPSASEEALKITAAKQNVRVLTCGQWGERVPGLDFKRVNGGLLVQDRDLGMVGAEELRVVTQRQPTEQELRDALFCWKVAKFVKSNAIVYAKNNMTIGIGAGQMSRVYSAKIAGIKAADEGLEVKGSSMASDAFFPFRDGIDAAAAAGVTCVIQPGGSIRDDEVIAAADEHGIAMLFTDMRHFRH</sequence>
<accession>A7ZUM3</accession>
<evidence type="ECO:0000255" key="1">
    <source>
        <dbReference type="HAMAP-Rule" id="MF_00139"/>
    </source>
</evidence>
<evidence type="ECO:0000255" key="2">
    <source>
        <dbReference type="PROSITE-ProRule" id="PRU01202"/>
    </source>
</evidence>